<accession>Q9SCQ5</accession>
<sequence>MDRISNLSDDLLLKIVSSLPTKDVVVTMLLSKRWKFLWMMVPKLRFDDEFELEPSYYGRFLKYVDKSMVLNRAQVLETVKFNVGPCCSSEDIATWIRIGMVRNMRELEISHCEGYFREHRSIKLPKSLYTYEKLEVLKLASTVVLNVPIDVCFPSLKSLHLVCVEYKTKKSHRRLLSGCPVLEELVLDKSYNSFHVRSFYVEIPTLQSLSILDTSGELYGDFTFVVNAPALKYFNFVDFYGDLCLRDNMPEVVDVNIKVIYRNPKKLLGPLKSVKRLSLCLSPSTTLHNHMEFYQLVHLELCGDALMWWDLLTWMLQSSPKLQVLKIYECKCEEHDYLDDPIEEHWEEPSSVPQCLLFHLNIFEWKYYNAGDEEKKVVAYILKNARQLKTATFSAASYLYPKEERSRELNELVYMARASSSCQLLLD</sequence>
<reference key="1">
    <citation type="journal article" date="2000" name="Nature">
        <title>Sequence and analysis of chromosome 3 of the plant Arabidopsis thaliana.</title>
        <authorList>
            <person name="Salanoubat M."/>
            <person name="Lemcke K."/>
            <person name="Rieger M."/>
            <person name="Ansorge W."/>
            <person name="Unseld M."/>
            <person name="Fartmann B."/>
            <person name="Valle G."/>
            <person name="Bloecker H."/>
            <person name="Perez-Alonso M."/>
            <person name="Obermaier B."/>
            <person name="Delseny M."/>
            <person name="Boutry M."/>
            <person name="Grivell L.A."/>
            <person name="Mache R."/>
            <person name="Puigdomenech P."/>
            <person name="De Simone V."/>
            <person name="Choisne N."/>
            <person name="Artiguenave F."/>
            <person name="Robert C."/>
            <person name="Brottier P."/>
            <person name="Wincker P."/>
            <person name="Cattolico L."/>
            <person name="Weissenbach J."/>
            <person name="Saurin W."/>
            <person name="Quetier F."/>
            <person name="Schaefer M."/>
            <person name="Mueller-Auer S."/>
            <person name="Gabel C."/>
            <person name="Fuchs M."/>
            <person name="Benes V."/>
            <person name="Wurmbach E."/>
            <person name="Drzonek H."/>
            <person name="Erfle H."/>
            <person name="Jordan N."/>
            <person name="Bangert S."/>
            <person name="Wiedelmann R."/>
            <person name="Kranz H."/>
            <person name="Voss H."/>
            <person name="Holland R."/>
            <person name="Brandt P."/>
            <person name="Nyakatura G."/>
            <person name="Vezzi A."/>
            <person name="D'Angelo M."/>
            <person name="Pallavicini A."/>
            <person name="Toppo S."/>
            <person name="Simionati B."/>
            <person name="Conrad A."/>
            <person name="Hornischer K."/>
            <person name="Kauer G."/>
            <person name="Loehnert T.-H."/>
            <person name="Nordsiek G."/>
            <person name="Reichelt J."/>
            <person name="Scharfe M."/>
            <person name="Schoen O."/>
            <person name="Bargues M."/>
            <person name="Terol J."/>
            <person name="Climent J."/>
            <person name="Navarro P."/>
            <person name="Collado C."/>
            <person name="Perez-Perez A."/>
            <person name="Ottenwaelder B."/>
            <person name="Duchemin D."/>
            <person name="Cooke R."/>
            <person name="Laudie M."/>
            <person name="Berger-Llauro C."/>
            <person name="Purnelle B."/>
            <person name="Masuy D."/>
            <person name="de Haan M."/>
            <person name="Maarse A.C."/>
            <person name="Alcaraz J.-P."/>
            <person name="Cottet A."/>
            <person name="Casacuberta E."/>
            <person name="Monfort A."/>
            <person name="Argiriou A."/>
            <person name="Flores M."/>
            <person name="Liguori R."/>
            <person name="Vitale D."/>
            <person name="Mannhaupt G."/>
            <person name="Haase D."/>
            <person name="Schoof H."/>
            <person name="Rudd S."/>
            <person name="Zaccaria P."/>
            <person name="Mewes H.-W."/>
            <person name="Mayer K.F.X."/>
            <person name="Kaul S."/>
            <person name="Town C.D."/>
            <person name="Koo H.L."/>
            <person name="Tallon L.J."/>
            <person name="Jenkins J."/>
            <person name="Rooney T."/>
            <person name="Rizzo M."/>
            <person name="Walts A."/>
            <person name="Utterback T."/>
            <person name="Fujii C.Y."/>
            <person name="Shea T.P."/>
            <person name="Creasy T.H."/>
            <person name="Haas B."/>
            <person name="Maiti R."/>
            <person name="Wu D."/>
            <person name="Peterson J."/>
            <person name="Van Aken S."/>
            <person name="Pai G."/>
            <person name="Militscher J."/>
            <person name="Sellers P."/>
            <person name="Gill J.E."/>
            <person name="Feldblyum T.V."/>
            <person name="Preuss D."/>
            <person name="Lin X."/>
            <person name="Nierman W.C."/>
            <person name="Salzberg S.L."/>
            <person name="White O."/>
            <person name="Venter J.C."/>
            <person name="Fraser C.M."/>
            <person name="Kaneko T."/>
            <person name="Nakamura Y."/>
            <person name="Sato S."/>
            <person name="Kato T."/>
            <person name="Asamizu E."/>
            <person name="Sasamoto S."/>
            <person name="Kimura T."/>
            <person name="Idesawa K."/>
            <person name="Kawashima K."/>
            <person name="Kishida Y."/>
            <person name="Kiyokawa C."/>
            <person name="Kohara M."/>
            <person name="Matsumoto M."/>
            <person name="Matsuno A."/>
            <person name="Muraki A."/>
            <person name="Nakayama S."/>
            <person name="Nakazaki N."/>
            <person name="Shinpo S."/>
            <person name="Takeuchi C."/>
            <person name="Wada T."/>
            <person name="Watanabe A."/>
            <person name="Yamada M."/>
            <person name="Yasuda M."/>
            <person name="Tabata S."/>
        </authorList>
    </citation>
    <scope>NUCLEOTIDE SEQUENCE [LARGE SCALE GENOMIC DNA]</scope>
    <source>
        <strain>cv. Columbia</strain>
    </source>
</reference>
<reference key="2">
    <citation type="journal article" date="2017" name="Plant J.">
        <title>Araport11: a complete reannotation of the Arabidopsis thaliana reference genome.</title>
        <authorList>
            <person name="Cheng C.Y."/>
            <person name="Krishnakumar V."/>
            <person name="Chan A.P."/>
            <person name="Thibaud-Nissen F."/>
            <person name="Schobel S."/>
            <person name="Town C.D."/>
        </authorList>
    </citation>
    <scope>GENOME REANNOTATION</scope>
    <source>
        <strain>cv. Columbia</strain>
    </source>
</reference>
<gene>
    <name type="ordered locus">At3g50710</name>
    <name type="ORF">T3A5.90</name>
</gene>
<protein>
    <recommendedName>
        <fullName>Putative FBD-associated F-box protein At3g50710</fullName>
    </recommendedName>
</protein>
<name>FBD10_ARATH</name>
<proteinExistence type="predicted"/>
<dbReference type="EMBL" id="AL132979">
    <property type="protein sequence ID" value="CAB62440.1"/>
    <property type="molecule type" value="Genomic_DNA"/>
</dbReference>
<dbReference type="EMBL" id="CP002686">
    <property type="protein sequence ID" value="AEE78700.1"/>
    <property type="molecule type" value="Genomic_DNA"/>
</dbReference>
<dbReference type="PIR" id="T46148">
    <property type="entry name" value="T46148"/>
</dbReference>
<dbReference type="RefSeq" id="NP_190640.1">
    <property type="nucleotide sequence ID" value="NM_114931.2"/>
</dbReference>
<dbReference type="FunCoup" id="Q9SCQ5">
    <property type="interactions" value="2"/>
</dbReference>
<dbReference type="PaxDb" id="3702-AT3G50710.1"/>
<dbReference type="EnsemblPlants" id="AT3G50710.1">
    <property type="protein sequence ID" value="AT3G50710.1"/>
    <property type="gene ID" value="AT3G50710"/>
</dbReference>
<dbReference type="GeneID" id="824235"/>
<dbReference type="Gramene" id="AT3G50710.1">
    <property type="protein sequence ID" value="AT3G50710.1"/>
    <property type="gene ID" value="AT3G50710"/>
</dbReference>
<dbReference type="KEGG" id="ath:AT3G50710"/>
<dbReference type="Araport" id="AT3G50710"/>
<dbReference type="TAIR" id="AT3G50710"/>
<dbReference type="HOGENOM" id="CLU_010721_1_2_1"/>
<dbReference type="InParanoid" id="Q9SCQ5"/>
<dbReference type="OMA" id="FVCNELP"/>
<dbReference type="PhylomeDB" id="Q9SCQ5"/>
<dbReference type="PRO" id="PR:Q9SCQ5"/>
<dbReference type="Proteomes" id="UP000006548">
    <property type="component" value="Chromosome 3"/>
</dbReference>
<dbReference type="ExpressionAtlas" id="Q9SCQ5">
    <property type="expression patterns" value="baseline and differential"/>
</dbReference>
<dbReference type="CDD" id="cd22160">
    <property type="entry name" value="F-box_AtFBL13-like"/>
    <property type="match status" value="1"/>
</dbReference>
<dbReference type="Gene3D" id="3.80.10.10">
    <property type="entry name" value="Ribonuclease Inhibitor"/>
    <property type="match status" value="1"/>
</dbReference>
<dbReference type="InterPro" id="IPR036047">
    <property type="entry name" value="F-box-like_dom_sf"/>
</dbReference>
<dbReference type="InterPro" id="IPR053781">
    <property type="entry name" value="F-box_AtFBL13-like"/>
</dbReference>
<dbReference type="InterPro" id="IPR001810">
    <property type="entry name" value="F-box_dom"/>
</dbReference>
<dbReference type="InterPro" id="IPR006566">
    <property type="entry name" value="FBD"/>
</dbReference>
<dbReference type="InterPro" id="IPR050232">
    <property type="entry name" value="FBL13/AtMIF1-like"/>
</dbReference>
<dbReference type="InterPro" id="IPR032675">
    <property type="entry name" value="LRR_dom_sf"/>
</dbReference>
<dbReference type="InterPro" id="IPR055411">
    <property type="entry name" value="LRR_FXL15/At3g58940/PEG3-like"/>
</dbReference>
<dbReference type="PANTHER" id="PTHR31900:SF34">
    <property type="entry name" value="EMB|CAB62440.1-RELATED"/>
    <property type="match status" value="1"/>
</dbReference>
<dbReference type="PANTHER" id="PTHR31900">
    <property type="entry name" value="F-BOX/RNI SUPERFAMILY PROTEIN-RELATED"/>
    <property type="match status" value="1"/>
</dbReference>
<dbReference type="Pfam" id="PF00646">
    <property type="entry name" value="F-box"/>
    <property type="match status" value="1"/>
</dbReference>
<dbReference type="Pfam" id="PF08387">
    <property type="entry name" value="FBD"/>
    <property type="match status" value="1"/>
</dbReference>
<dbReference type="Pfam" id="PF24758">
    <property type="entry name" value="LRR_At5g56370"/>
    <property type="match status" value="1"/>
</dbReference>
<dbReference type="SMART" id="SM00579">
    <property type="entry name" value="FBD"/>
    <property type="match status" value="1"/>
</dbReference>
<dbReference type="SUPFAM" id="SSF81383">
    <property type="entry name" value="F-box domain"/>
    <property type="match status" value="1"/>
</dbReference>
<dbReference type="SUPFAM" id="SSF52047">
    <property type="entry name" value="RNI-like"/>
    <property type="match status" value="1"/>
</dbReference>
<keyword id="KW-1185">Reference proteome</keyword>
<organism>
    <name type="scientific">Arabidopsis thaliana</name>
    <name type="common">Mouse-ear cress</name>
    <dbReference type="NCBI Taxonomy" id="3702"/>
    <lineage>
        <taxon>Eukaryota</taxon>
        <taxon>Viridiplantae</taxon>
        <taxon>Streptophyta</taxon>
        <taxon>Embryophyta</taxon>
        <taxon>Tracheophyta</taxon>
        <taxon>Spermatophyta</taxon>
        <taxon>Magnoliopsida</taxon>
        <taxon>eudicotyledons</taxon>
        <taxon>Gunneridae</taxon>
        <taxon>Pentapetalae</taxon>
        <taxon>rosids</taxon>
        <taxon>malvids</taxon>
        <taxon>Brassicales</taxon>
        <taxon>Brassicaceae</taxon>
        <taxon>Camelineae</taxon>
        <taxon>Arabidopsis</taxon>
    </lineage>
</organism>
<feature type="chain" id="PRO_0000283143" description="Putative FBD-associated F-box protein At3g50710">
    <location>
        <begin position="1"/>
        <end position="427"/>
    </location>
</feature>
<feature type="domain" description="F-box">
    <location>
        <begin position="1"/>
        <end position="53"/>
    </location>
</feature>
<feature type="domain" description="FBD">
    <location>
        <begin position="345"/>
        <end position="395"/>
    </location>
</feature>